<name>RAN_BOVIN</name>
<comment type="function">
    <text evidence="2">GTPase involved in nucleocytoplasmic transport, participating both to the import and the export from the nucleus of proteins and RNAs. Switches between a cytoplasmic GDP- and a nuclear GTP-bound state by nucleotide exchange and GTP hydrolysis. Nuclear import receptors such as importin beta bind their substrates only in the absence of GTP-bound RAN and release them upon direct interaction with GTP-bound RAN, while export receptors behave in the opposite way. Thereby, RAN controls cargo loading and release by transport receptors in the proper compartment and ensures the directionality of the transport. Interaction with RANBP1 induces a conformation change in the complex formed by XPO1 and RAN that triggers the release of the nuclear export signal of cargo proteins. RAN (GTP-bound form) triggers microtubule assembly at mitotic chromosomes and is required for normal mitotic spindle assembly and chromosome segregation. Required for normal progress through mitosis. The complex with BIRC5/survivin plays a role in mitotic spindle formation by serving as a physical scaffold to help deliver the RAN effector molecule TPX2 to microtubules. Acts as a negative regulator of the kinase activity of VRK1 and VRK2. Enhances AR-mediated transactivation.</text>
</comment>
<comment type="catalytic activity">
    <reaction evidence="2">
        <text>GTP + H2O = GDP + phosphate + H(+)</text>
        <dbReference type="Rhea" id="RHEA:19669"/>
        <dbReference type="ChEBI" id="CHEBI:15377"/>
        <dbReference type="ChEBI" id="CHEBI:15378"/>
        <dbReference type="ChEBI" id="CHEBI:37565"/>
        <dbReference type="ChEBI" id="CHEBI:43474"/>
        <dbReference type="ChEBI" id="CHEBI:58189"/>
    </reaction>
    <physiologicalReaction direction="left-to-right" evidence="2">
        <dbReference type="Rhea" id="RHEA:19670"/>
    </physiologicalReaction>
</comment>
<comment type="cofactor">
    <cofactor evidence="2">
        <name>Mg(2+)</name>
        <dbReference type="ChEBI" id="CHEBI:18420"/>
    </cofactor>
    <text evidence="2">Mg(2+) interacts primarily with the phosphate groups of the bound guanine nucleotide.</text>
</comment>
<comment type="subunit">
    <text evidence="1 2 3">Monomer. Interacts with RANGAP1, which promotes RAN-mediated GTP hydrolysis. Interacts with KPNB1. Interaction with KPNB1 inhibits RANGAP1-mediated stimulation of GTPase activity. Interacts with RCC1 which promotes the exchange of RAN-bound GDP by GTP. Interaction with KPNB1 inhibits RCC1-mediated exchange of RAN-bound GDP by GTP. Interacts (GTP-bound form) with TNPO1; the interaction is direct. Interacts (GTP-bound form) with TNPO3; the interaction is direct. Interacts with KPNB1 and with TNPO1; both inhibit RAN GTPase activity. Interacts (via C-terminus) with RANBP1, which alleviates the inhibition of RAN GTPase activity. Interacts with RANGRF, which promotes the release of bound guanine nucleotide. RANGRF and RCC1 compete for an overlapping binding site on RAN. Identified in a complex with KPNA2 and CSE1L; interaction with RANBP1 mediates dissociation of RAN from this complex. Interaction with both RANBP1 and KPNA2 promotes dissociation of the complex between RAN and KPNB1. Identified in a complex composed of RAN, RANGAP1 and RANBP1. Identified in a complex that contains TNPO1, RAN and RANBP1. Identified in a nuclear export complex with XPO1. Found in a nuclear export complex with RANBP3 and XPO1. Interacts with RANBP2/NUP358. Interaction with RANBP1 or RANBP2 induces a conformation change in the complex formed by XPO1 and RAN that triggers the release of the nuclear export signal of cargo proteins. Component of a nuclear export receptor complex composed of KPNB1, RAN, SNUPN and XPO1 (By similarity). Found in a nuclear export complex with RAN, XPO5 and pre-miRNA (By similarity). Interacts (GTP-bound form) with XPO5 (By similarity). Part of a complex consisting of RANBP9, RAN, DYRK1B and COPS5. Interacts with RANBP9 and RANBP10. Interacts in its GTP-bound form with BIRC5/survivin at S and M phases of the cell cycle. Interacts with TERT; the interaction requires hydrogen peroxide-mediated phosphorylation of TERT and transports TERT to the nucleus. Interacts with MAD2L2. Interacts with VRK1 and VRK3. Interacts with VRK2 (By similarity). Interacts with NEMP1 and KPNB1 (By similarity). Interacts (GDP-bound form) with NUTF2; regulates RAN nuclear import. Interacts with CAPG; mediates CAPG nuclear import. Interacts with NUP153. Interacts with the AR N-terminal poly-Gln region; the interaction with AR is inversely correlated with the poly-Gln length (By similarity). Interacts with MYCBP2, which promotes RAN-mediated GTP hydrolysis (By similarity). Interacts with EPG5 (By similarity).</text>
</comment>
<comment type="subcellular location">
    <subcellularLocation>
        <location evidence="2">Nucleus</location>
    </subcellularLocation>
    <subcellularLocation>
        <location evidence="2">Nucleus envelope</location>
    </subcellularLocation>
    <subcellularLocation>
        <location evidence="2">Cytoplasm</location>
        <location evidence="2">Cytosol</location>
    </subcellularLocation>
    <subcellularLocation>
        <location evidence="2">Cytoplasm</location>
    </subcellularLocation>
    <subcellularLocation>
        <location evidence="2">Melanosome</location>
    </subcellularLocation>
    <text evidence="2">Predominantly nuclear during interphase. Becomes dispersed throughout the cytoplasm during mitosis (By similarity). Identified by mass spectrometry in melanosome fractions from stage I to stage IV (By similarity).</text>
</comment>
<comment type="PTM">
    <text evidence="2">Acetylation by KAT5 at Lys-134 is increased during mitosis, impairs RANGRF binding and enhances RCC1 binding. Acetylation at Lys-37 enhances the association with nuclear export components. Deacetylation of Lys-37 by SIRT7 regulates the nuclear export of NF-kappa-B subunit RELA/p65.</text>
</comment>
<comment type="similarity">
    <text evidence="4 5">Belongs to the small GTPase superfamily. Ran family.</text>
</comment>
<organism>
    <name type="scientific">Bos taurus</name>
    <name type="common">Bovine</name>
    <dbReference type="NCBI Taxonomy" id="9913"/>
    <lineage>
        <taxon>Eukaryota</taxon>
        <taxon>Metazoa</taxon>
        <taxon>Chordata</taxon>
        <taxon>Craniata</taxon>
        <taxon>Vertebrata</taxon>
        <taxon>Euteleostomi</taxon>
        <taxon>Mammalia</taxon>
        <taxon>Eutheria</taxon>
        <taxon>Laurasiatheria</taxon>
        <taxon>Artiodactyla</taxon>
        <taxon>Ruminantia</taxon>
        <taxon>Pecora</taxon>
        <taxon>Bovidae</taxon>
        <taxon>Bovinae</taxon>
        <taxon>Bos</taxon>
    </lineage>
</organism>
<accession>Q3T054</accession>
<feature type="initiator methionine" description="Removed" evidence="2">
    <location>
        <position position="1"/>
    </location>
</feature>
<feature type="chain" id="PRO_0000249772" description="GTP-binding nuclear protein Ran">
    <location>
        <begin position="2"/>
        <end position="216"/>
    </location>
</feature>
<feature type="domain" description="Small GTPase Ran-type" evidence="4">
    <location>
        <begin position="7"/>
        <end position="171"/>
    </location>
</feature>
<feature type="region of interest" description="Switch-I" evidence="4">
    <location>
        <begin position="37"/>
        <end position="45"/>
    </location>
</feature>
<feature type="region of interest" description="Switch-II" evidence="4">
    <location>
        <begin position="68"/>
        <end position="84"/>
    </location>
</feature>
<feature type="region of interest" description="Interaction with RANBP1" evidence="2">
    <location>
        <begin position="211"/>
        <end position="216"/>
    </location>
</feature>
<feature type="binding site" evidence="1">
    <location>
        <begin position="18"/>
        <end position="25"/>
    </location>
    <ligand>
        <name>GTP</name>
        <dbReference type="ChEBI" id="CHEBI:37565"/>
    </ligand>
</feature>
<feature type="binding site" evidence="1">
    <location>
        <begin position="36"/>
        <end position="42"/>
    </location>
    <ligand>
        <name>GTP</name>
        <dbReference type="ChEBI" id="CHEBI:37565"/>
    </ligand>
</feature>
<feature type="binding site" evidence="1">
    <location>
        <position position="68"/>
    </location>
    <ligand>
        <name>GTP</name>
        <dbReference type="ChEBI" id="CHEBI:37565"/>
    </ligand>
</feature>
<feature type="binding site" evidence="1">
    <location>
        <begin position="122"/>
        <end position="125"/>
    </location>
    <ligand>
        <name>GTP</name>
        <dbReference type="ChEBI" id="CHEBI:37565"/>
    </ligand>
</feature>
<feature type="binding site" evidence="1">
    <location>
        <begin position="150"/>
        <end position="152"/>
    </location>
    <ligand>
        <name>GTP</name>
        <dbReference type="ChEBI" id="CHEBI:37565"/>
    </ligand>
</feature>
<feature type="site" description="Essential for GTP hydrolysis" evidence="2">
    <location>
        <position position="69"/>
    </location>
</feature>
<feature type="modified residue" description="N-acetylalanine" evidence="2">
    <location>
        <position position="2"/>
    </location>
</feature>
<feature type="modified residue" description="Phosphothreonine" evidence="2">
    <location>
        <position position="24"/>
    </location>
</feature>
<feature type="modified residue" description="N6-acetyllysine" evidence="2">
    <location>
        <position position="37"/>
    </location>
</feature>
<feature type="modified residue" description="N6-acetyllysine" evidence="2">
    <location>
        <position position="60"/>
    </location>
</feature>
<feature type="modified residue" description="N6-acetyllysine; alternate" evidence="2">
    <location>
        <position position="71"/>
    </location>
</feature>
<feature type="modified residue" description="N6-acetyllysine" evidence="2">
    <location>
        <position position="99"/>
    </location>
</feature>
<feature type="modified residue" description="N6-acetyllysine" evidence="2">
    <location>
        <position position="134"/>
    </location>
</feature>
<feature type="modified residue" description="N6-acetyllysine; alternate" evidence="2">
    <location>
        <position position="159"/>
    </location>
</feature>
<feature type="modified residue" description="N6-succinyllysine; alternate" evidence="3">
    <location>
        <position position="159"/>
    </location>
</feature>
<feature type="cross-link" description="Glycyl lysine isopeptide (Lys-Gly) (interchain with G-Cter in SUMO2); alternate" evidence="2">
    <location>
        <position position="71"/>
    </location>
</feature>
<feature type="cross-link" description="Glycyl lysine isopeptide (Lys-Gly) (interchain with G-Cter in ubiquitin); alternate" evidence="2">
    <location>
        <position position="71"/>
    </location>
</feature>
<feature type="cross-link" description="Glycyl lysine isopeptide (Lys-Gly) (interchain with G-Cter in SUMO2)" evidence="2">
    <location>
        <position position="152"/>
    </location>
</feature>
<sequence length="216" mass="24423">MAAQGEPQVQFKLVLVGDGGTGKTTFVKRHLTGEFEKKYVATLGVEVHPLVFHTNRGPIKFNVWDTAGQEKFGGLRDGYYIQAQCAIIMFDVTSRVTYKNVPNWHRDLVRVCENIPIVLCGNKVDIKDRKVKAKSIVFHRKKNLQYYDISAKSNYNFEKPFLWLARKLIGDPNLEFVAMPALAPPEVVMDPALAAQYEHDLEVAQTTALPDEDDDL</sequence>
<protein>
    <recommendedName>
        <fullName>GTP-binding nuclear protein Ran</fullName>
        <ecNumber evidence="2">3.6.5.-</ecNumber>
    </recommendedName>
    <alternativeName>
        <fullName>GTPase Ran</fullName>
    </alternativeName>
    <alternativeName>
        <fullName>Ras-related nuclear protein</fullName>
    </alternativeName>
</protein>
<gene>
    <name type="primary">RAN</name>
</gene>
<reference key="1">
    <citation type="submission" date="2005-08" db="EMBL/GenBank/DDBJ databases">
        <authorList>
            <consortium name="NIH - Mammalian Gene Collection (MGC) project"/>
        </authorList>
    </citation>
    <scope>NUCLEOTIDE SEQUENCE [LARGE SCALE MRNA]</scope>
    <source>
        <strain>Hereford</strain>
        <tissue>Testis</tissue>
    </source>
</reference>
<dbReference type="EC" id="3.6.5.-" evidence="2"/>
<dbReference type="EMBL" id="BC102559">
    <property type="protein sequence ID" value="AAI02560.1"/>
    <property type="molecule type" value="mRNA"/>
</dbReference>
<dbReference type="RefSeq" id="NP_001029877.1">
    <property type="nucleotide sequence ID" value="NM_001034705.2"/>
</dbReference>
<dbReference type="RefSeq" id="XP_024833173.1">
    <property type="nucleotide sequence ID" value="XM_024977405.2"/>
</dbReference>
<dbReference type="RefSeq" id="XP_059732115.1">
    <property type="nucleotide sequence ID" value="XM_059876132.1"/>
</dbReference>
<dbReference type="BMRB" id="Q3T054"/>
<dbReference type="SMR" id="Q3T054"/>
<dbReference type="FunCoup" id="Q3T054">
    <property type="interactions" value="3824"/>
</dbReference>
<dbReference type="STRING" id="9913.ENSBTAP00000067034"/>
<dbReference type="PaxDb" id="9913-ENSBTAP00000046975"/>
<dbReference type="PeptideAtlas" id="Q3T054"/>
<dbReference type="GeneID" id="540457"/>
<dbReference type="KEGG" id="bta:540457"/>
<dbReference type="CTD" id="5901"/>
<dbReference type="VEuPathDB" id="HostDB:ENSBTAG00000055033"/>
<dbReference type="eggNOG" id="KOG0096">
    <property type="taxonomic scope" value="Eukaryota"/>
</dbReference>
<dbReference type="InParanoid" id="Q3T054"/>
<dbReference type="OMA" id="FNAWDTA"/>
<dbReference type="OrthoDB" id="48625at2759"/>
<dbReference type="Reactome" id="R-BTA-1655829">
    <property type="pathway name" value="Regulation of cholesterol biosynthesis by SREBP (SREBF)"/>
</dbReference>
<dbReference type="Reactome" id="R-BTA-5578749">
    <property type="pathway name" value="Transcriptional regulation by small RNAs"/>
</dbReference>
<dbReference type="Reactome" id="R-BTA-9615933">
    <property type="pathway name" value="Postmitotic nuclear pore complex (NPC) reformation"/>
</dbReference>
<dbReference type="Proteomes" id="UP000009136">
    <property type="component" value="Chromosome 17"/>
</dbReference>
<dbReference type="Bgee" id="ENSBTAG00000055033">
    <property type="expression patterns" value="Expressed in spermatid and 102 other cell types or tissues"/>
</dbReference>
<dbReference type="GO" id="GO:0005737">
    <property type="term" value="C:cytoplasm"/>
    <property type="evidence" value="ECO:0000318"/>
    <property type="project" value="GO_Central"/>
</dbReference>
<dbReference type="GO" id="GO:0005829">
    <property type="term" value="C:cytosol"/>
    <property type="evidence" value="ECO:0007669"/>
    <property type="project" value="UniProtKB-SubCell"/>
</dbReference>
<dbReference type="GO" id="GO:0042470">
    <property type="term" value="C:melanosome"/>
    <property type="evidence" value="ECO:0007669"/>
    <property type="project" value="UniProtKB-SubCell"/>
</dbReference>
<dbReference type="GO" id="GO:0005635">
    <property type="term" value="C:nuclear envelope"/>
    <property type="evidence" value="ECO:0007669"/>
    <property type="project" value="UniProtKB-SubCell"/>
</dbReference>
<dbReference type="GO" id="GO:0005634">
    <property type="term" value="C:nucleus"/>
    <property type="evidence" value="ECO:0000250"/>
    <property type="project" value="UniProtKB"/>
</dbReference>
<dbReference type="GO" id="GO:0005525">
    <property type="term" value="F:GTP binding"/>
    <property type="evidence" value="ECO:0000250"/>
    <property type="project" value="UniProtKB"/>
</dbReference>
<dbReference type="GO" id="GO:0003924">
    <property type="term" value="F:GTPase activity"/>
    <property type="evidence" value="ECO:0000250"/>
    <property type="project" value="UniProtKB"/>
</dbReference>
<dbReference type="GO" id="GO:0000287">
    <property type="term" value="F:magnesium ion binding"/>
    <property type="evidence" value="ECO:0000250"/>
    <property type="project" value="UniProtKB"/>
</dbReference>
<dbReference type="GO" id="GO:0051301">
    <property type="term" value="P:cell division"/>
    <property type="evidence" value="ECO:0007669"/>
    <property type="project" value="UniProtKB-KW"/>
</dbReference>
<dbReference type="GO" id="GO:0046039">
    <property type="term" value="P:GTP metabolic process"/>
    <property type="evidence" value="ECO:0000250"/>
    <property type="project" value="UniProtKB"/>
</dbReference>
<dbReference type="GO" id="GO:0000070">
    <property type="term" value="P:mitotic sister chromatid segregation"/>
    <property type="evidence" value="ECO:0000250"/>
    <property type="project" value="UniProtKB"/>
</dbReference>
<dbReference type="GO" id="GO:0006611">
    <property type="term" value="P:protein export from nucleus"/>
    <property type="evidence" value="ECO:0000250"/>
    <property type="project" value="UniProtKB"/>
</dbReference>
<dbReference type="GO" id="GO:0006606">
    <property type="term" value="P:protein import into nucleus"/>
    <property type="evidence" value="ECO:0000250"/>
    <property type="project" value="UniProtKB"/>
</dbReference>
<dbReference type="GO" id="GO:0000054">
    <property type="term" value="P:ribosomal subunit export from nucleus"/>
    <property type="evidence" value="ECO:0000318"/>
    <property type="project" value="GO_Central"/>
</dbReference>
<dbReference type="GO" id="GO:0061015">
    <property type="term" value="P:snRNA import into nucleus"/>
    <property type="evidence" value="ECO:0000250"/>
    <property type="project" value="UniProtKB"/>
</dbReference>
<dbReference type="CDD" id="cd00877">
    <property type="entry name" value="Ran"/>
    <property type="match status" value="1"/>
</dbReference>
<dbReference type="FunFam" id="3.40.50.300:FF:000131">
    <property type="entry name" value="GTP-binding nuclear protein Ran"/>
    <property type="match status" value="1"/>
</dbReference>
<dbReference type="Gene3D" id="3.40.50.300">
    <property type="entry name" value="P-loop containing nucleotide triphosphate hydrolases"/>
    <property type="match status" value="1"/>
</dbReference>
<dbReference type="InterPro" id="IPR027417">
    <property type="entry name" value="P-loop_NTPase"/>
</dbReference>
<dbReference type="InterPro" id="IPR002041">
    <property type="entry name" value="Ran_GTPase"/>
</dbReference>
<dbReference type="InterPro" id="IPR005225">
    <property type="entry name" value="Small_GTP-bd"/>
</dbReference>
<dbReference type="InterPro" id="IPR001806">
    <property type="entry name" value="Small_GTPase"/>
</dbReference>
<dbReference type="NCBIfam" id="TIGR00231">
    <property type="entry name" value="small_GTP"/>
    <property type="match status" value="1"/>
</dbReference>
<dbReference type="PANTHER" id="PTHR24071:SF0">
    <property type="entry name" value="GTP-BINDING NUCLEAR PROTEIN RAN"/>
    <property type="match status" value="1"/>
</dbReference>
<dbReference type="PANTHER" id="PTHR24071">
    <property type="entry name" value="RAN GTPASE"/>
    <property type="match status" value="1"/>
</dbReference>
<dbReference type="Pfam" id="PF00071">
    <property type="entry name" value="Ras"/>
    <property type="match status" value="1"/>
</dbReference>
<dbReference type="PRINTS" id="PR00627">
    <property type="entry name" value="GTPRANTC4"/>
</dbReference>
<dbReference type="SMART" id="SM00175">
    <property type="entry name" value="RAB"/>
    <property type="match status" value="1"/>
</dbReference>
<dbReference type="SMART" id="SM00176">
    <property type="entry name" value="RAN"/>
    <property type="match status" value="1"/>
</dbReference>
<dbReference type="SMART" id="SM00173">
    <property type="entry name" value="RAS"/>
    <property type="match status" value="1"/>
</dbReference>
<dbReference type="SMART" id="SM00174">
    <property type="entry name" value="RHO"/>
    <property type="match status" value="1"/>
</dbReference>
<dbReference type="SUPFAM" id="SSF52540">
    <property type="entry name" value="P-loop containing nucleoside triphosphate hydrolases"/>
    <property type="match status" value="1"/>
</dbReference>
<dbReference type="PROSITE" id="PS51418">
    <property type="entry name" value="RAN"/>
    <property type="match status" value="1"/>
</dbReference>
<proteinExistence type="evidence at transcript level"/>
<keyword id="KW-0007">Acetylation</keyword>
<keyword id="KW-0131">Cell cycle</keyword>
<keyword id="KW-0132">Cell division</keyword>
<keyword id="KW-0963">Cytoplasm</keyword>
<keyword id="KW-0342">GTP-binding</keyword>
<keyword id="KW-0378">Hydrolase</keyword>
<keyword id="KW-1017">Isopeptide bond</keyword>
<keyword id="KW-0460">Magnesium</keyword>
<keyword id="KW-0479">Metal-binding</keyword>
<keyword id="KW-0498">Mitosis</keyword>
<keyword id="KW-0547">Nucleotide-binding</keyword>
<keyword id="KW-0539">Nucleus</keyword>
<keyword id="KW-0597">Phosphoprotein</keyword>
<keyword id="KW-0653">Protein transport</keyword>
<keyword id="KW-1185">Reference proteome</keyword>
<keyword id="KW-0813">Transport</keyword>
<keyword id="KW-0832">Ubl conjugation</keyword>
<evidence type="ECO:0000250" key="1">
    <source>
        <dbReference type="UniProtKB" id="P62825"/>
    </source>
</evidence>
<evidence type="ECO:0000250" key="2">
    <source>
        <dbReference type="UniProtKB" id="P62826"/>
    </source>
</evidence>
<evidence type="ECO:0000250" key="3">
    <source>
        <dbReference type="UniProtKB" id="P62827"/>
    </source>
</evidence>
<evidence type="ECO:0000255" key="4">
    <source>
        <dbReference type="PROSITE-ProRule" id="PRU00752"/>
    </source>
</evidence>
<evidence type="ECO:0000305" key="5"/>